<accession>P97819</accession>
<accession>Q99LA9</accession>
<accession>Q9JK61</accession>
<organism>
    <name type="scientific">Mus musculus</name>
    <name type="common">Mouse</name>
    <dbReference type="NCBI Taxonomy" id="10090"/>
    <lineage>
        <taxon>Eukaryota</taxon>
        <taxon>Metazoa</taxon>
        <taxon>Chordata</taxon>
        <taxon>Craniata</taxon>
        <taxon>Vertebrata</taxon>
        <taxon>Euteleostomi</taxon>
        <taxon>Mammalia</taxon>
        <taxon>Eutheria</taxon>
        <taxon>Euarchontoglires</taxon>
        <taxon>Glires</taxon>
        <taxon>Rodentia</taxon>
        <taxon>Myomorpha</taxon>
        <taxon>Muroidea</taxon>
        <taxon>Muridae</taxon>
        <taxon>Murinae</taxon>
        <taxon>Mus</taxon>
        <taxon>Mus</taxon>
    </lineage>
</organism>
<sequence>MQFFGRLVNTLSSVTNLFSNPFRVKEVSLTDYVSSERVREEGQLILLQNVSNRTWDCVLVSPRNPQSGFRLFQLESEADALVNFQQFSSQLPPFYESSVQVLHVEVLQHLTDLIRNHPSWTVTHLAVELGIRECFHHSRIISCANSTENEEGCTPLHLACRKGDSEILVELVQYCHAQMDVTDNKGETAFHYAVQGDNPQVLQLLGKNASAGLNQVNNQGLTPLHLACKMGKQEMVRVLLLCNARCNIMGPGGFPIHTAMKFSQKGCAEMIISMDSNQIHSKDPRYGASPLHWAKNAEMARMLLKRGCDVDSTSSSGNTALHVAVMRNRFDCVMVLLTYGANAGARGEHGNTPLHLAMSKDNMEMVKALIVFGAEVDTPNDFGETPALIASKISKLITRKALLTLLKTVGADHHFPIIQGVSTEQGSAAATHPLFSLDRTQPPAISLNNLELQDLMPISRARKPAFILSSMRDEKRSHDHLLCLDGGGVKGLVIIQLLIAIEKASGVATKDLFDWVAGTSTGGILALAILHSKSMAYMRGVYFRMKDEVFRGSRPYESGPLEEFLKREFGEHTKMTDVKKPKVMLTGTLSDRQPAELHLFRNYDAPEAVREPRCNQNINLKPPTQPADQLVWRAARSSGAAPTYFRPNGRFLDGGLLANNPTLDAMTEIHEYNQDMIRKGQGNKVKKLSIVVSLGTGKSPQVPVTCVDVFRPSNPWELAKTVFGAKELGKMVVDCCTDPDGRAVDRARAWCEMVGIQYFRLNPQLGSDIMLDEVSDAVLVNALWETEVYIYEHREEFQKLVQLLLSP</sequence>
<evidence type="ECO:0000250" key="1">
    <source>
        <dbReference type="UniProtKB" id="A0A3L7I2I8"/>
    </source>
</evidence>
<evidence type="ECO:0000250" key="2">
    <source>
        <dbReference type="UniProtKB" id="O60733"/>
    </source>
</evidence>
<evidence type="ECO:0000250" key="3">
    <source>
        <dbReference type="UniProtKB" id="P97570"/>
    </source>
</evidence>
<evidence type="ECO:0000255" key="4"/>
<evidence type="ECO:0000255" key="5">
    <source>
        <dbReference type="PROSITE-ProRule" id="PRU01161"/>
    </source>
</evidence>
<evidence type="ECO:0000269" key="6">
    <source>
    </source>
</evidence>
<evidence type="ECO:0000269" key="7">
    <source>
    </source>
</evidence>
<evidence type="ECO:0000269" key="8">
    <source>
    </source>
</evidence>
<evidence type="ECO:0000269" key="9">
    <source>
    </source>
</evidence>
<evidence type="ECO:0000269" key="10">
    <source>
    </source>
</evidence>
<evidence type="ECO:0000269" key="11">
    <source>
    </source>
</evidence>
<evidence type="ECO:0000303" key="12">
    <source>
    </source>
</evidence>
<evidence type="ECO:0000303" key="13">
    <source>
    </source>
</evidence>
<evidence type="ECO:0000305" key="14">
    <source>
    </source>
</evidence>
<evidence type="ECO:0000305" key="15">
    <source>
    </source>
</evidence>
<evidence type="ECO:0000305" key="16">
    <source>
    </source>
</evidence>
<dbReference type="EC" id="3.1.1.4" evidence="9"/>
<dbReference type="EC" id="3.1.1.5" evidence="2"/>
<dbReference type="EC" id="3.1.2.2" evidence="9"/>
<dbReference type="EMBL" id="U88624">
    <property type="protein sequence ID" value="AAB48511.2"/>
    <property type="molecule type" value="mRNA"/>
</dbReference>
<dbReference type="EMBL" id="AF259401">
    <property type="protein sequence ID" value="AAF72651.1"/>
    <property type="molecule type" value="mRNA"/>
</dbReference>
<dbReference type="EMBL" id="BC003487">
    <property type="protein sequence ID" value="AAH03487.1"/>
    <property type="molecule type" value="mRNA"/>
</dbReference>
<dbReference type="EMBL" id="BC057209">
    <property type="protein sequence ID" value="AAH57209.1"/>
    <property type="molecule type" value="mRNA"/>
</dbReference>
<dbReference type="CCDS" id="CCDS27637.1">
    <molecule id="P97819-2"/>
</dbReference>
<dbReference type="CCDS" id="CCDS56991.1">
    <molecule id="P97819-1"/>
</dbReference>
<dbReference type="RefSeq" id="NP_001185952.1">
    <molecule id="P97819-1"/>
    <property type="nucleotide sequence ID" value="NM_001199023.2"/>
</dbReference>
<dbReference type="RefSeq" id="NP_001185953.1">
    <molecule id="P97819-2"/>
    <property type="nucleotide sequence ID" value="NM_001199024.2"/>
</dbReference>
<dbReference type="RefSeq" id="NP_001185954.1">
    <molecule id="P97819-2"/>
    <property type="nucleotide sequence ID" value="NM_001199025.2"/>
</dbReference>
<dbReference type="RefSeq" id="NP_001403319.1">
    <molecule id="P97819-2"/>
    <property type="nucleotide sequence ID" value="NM_001416390.1"/>
</dbReference>
<dbReference type="RefSeq" id="NP_001403320.1">
    <molecule id="P97819-2"/>
    <property type="nucleotide sequence ID" value="NM_001416391.1"/>
</dbReference>
<dbReference type="RefSeq" id="NP_001403321.1">
    <molecule id="P97819-2"/>
    <property type="nucleotide sequence ID" value="NM_001416392.1"/>
</dbReference>
<dbReference type="RefSeq" id="NP_001403322.1">
    <molecule id="P97819-2"/>
    <property type="nucleotide sequence ID" value="NM_001416393.1"/>
</dbReference>
<dbReference type="RefSeq" id="NP_001403324.1">
    <molecule id="P97819-2"/>
    <property type="nucleotide sequence ID" value="NM_001416395.1"/>
</dbReference>
<dbReference type="RefSeq" id="NP_001403325.1">
    <molecule id="P97819-1"/>
    <property type="nucleotide sequence ID" value="NM_001416396.1"/>
</dbReference>
<dbReference type="RefSeq" id="NP_001403326.1">
    <molecule id="P97819-1"/>
    <property type="nucleotide sequence ID" value="NM_001416397.1"/>
</dbReference>
<dbReference type="RefSeq" id="NP_001403327.1">
    <molecule id="P97819-1"/>
    <property type="nucleotide sequence ID" value="NM_001416398.1"/>
</dbReference>
<dbReference type="RefSeq" id="NP_001403328.1">
    <molecule id="P97819-1"/>
    <property type="nucleotide sequence ID" value="NM_001416399.1"/>
</dbReference>
<dbReference type="RefSeq" id="NP_058611.1">
    <molecule id="P97819-2"/>
    <property type="nucleotide sequence ID" value="NM_016915.5"/>
</dbReference>
<dbReference type="RefSeq" id="XP_006521215.1">
    <property type="nucleotide sequence ID" value="XM_006521152.2"/>
</dbReference>
<dbReference type="RefSeq" id="XP_006521216.1">
    <property type="nucleotide sequence ID" value="XM_006521153.3"/>
</dbReference>
<dbReference type="RefSeq" id="XP_006521217.1">
    <property type="nucleotide sequence ID" value="XM_006521154.1"/>
</dbReference>
<dbReference type="RefSeq" id="XP_006521218.1">
    <property type="nucleotide sequence ID" value="XM_006521155.2"/>
</dbReference>
<dbReference type="RefSeq" id="XP_006521219.1">
    <property type="nucleotide sequence ID" value="XM_006521156.3"/>
</dbReference>
<dbReference type="RefSeq" id="XP_006521220.1">
    <property type="nucleotide sequence ID" value="XM_006521157.3"/>
</dbReference>
<dbReference type="RefSeq" id="XP_006521221.1">
    <property type="nucleotide sequence ID" value="XM_006521158.2"/>
</dbReference>
<dbReference type="RefSeq" id="XP_006521222.1">
    <property type="nucleotide sequence ID" value="XM_006521159.3"/>
</dbReference>
<dbReference type="RefSeq" id="XP_006521223.1">
    <property type="nucleotide sequence ID" value="XM_006521160.2"/>
</dbReference>
<dbReference type="RefSeq" id="XP_017172187.1">
    <property type="nucleotide sequence ID" value="XM_017316698.1"/>
</dbReference>
<dbReference type="SMR" id="P97819"/>
<dbReference type="BioGRID" id="207296">
    <property type="interactions" value="1"/>
</dbReference>
<dbReference type="FunCoup" id="P97819">
    <property type="interactions" value="1571"/>
</dbReference>
<dbReference type="IntAct" id="P97819">
    <property type="interactions" value="3"/>
</dbReference>
<dbReference type="STRING" id="10090.ENSMUSP00000134672"/>
<dbReference type="ChEMBL" id="CHEMBL3259503"/>
<dbReference type="GlyGen" id="P97819">
    <property type="glycosylation" value="2 sites, 1 O-linked glycan (2 sites)"/>
</dbReference>
<dbReference type="iPTMnet" id="P97819"/>
<dbReference type="PhosphoSitePlus" id="P97819"/>
<dbReference type="SwissPalm" id="P97819"/>
<dbReference type="PaxDb" id="10090-ENSMUSP00000132071"/>
<dbReference type="PeptideAtlas" id="P97819"/>
<dbReference type="ProteomicsDB" id="289936">
    <molecule id="P97819-1"/>
</dbReference>
<dbReference type="ProteomicsDB" id="289937">
    <molecule id="P97819-2"/>
</dbReference>
<dbReference type="Pumba" id="P97819"/>
<dbReference type="Antibodypedia" id="225">
    <property type="antibodies" value="243 antibodies from 32 providers"/>
</dbReference>
<dbReference type="DNASU" id="53357"/>
<dbReference type="Ensembl" id="ENSMUST00000047816.15">
    <molecule id="P97819-2"/>
    <property type="protein sequence ID" value="ENSMUSP00000044234.9"/>
    <property type="gene ID" value="ENSMUSG00000042632.18"/>
</dbReference>
<dbReference type="Ensembl" id="ENSMUST00000166977.9">
    <molecule id="P97819-2"/>
    <property type="protein sequence ID" value="ENSMUSP00000132071.3"/>
    <property type="gene ID" value="ENSMUSG00000042632.18"/>
</dbReference>
<dbReference type="Ensembl" id="ENSMUST00000172403.9">
    <molecule id="P97819-2"/>
    <property type="protein sequence ID" value="ENSMUSP00000131081.3"/>
    <property type="gene ID" value="ENSMUSG00000042632.18"/>
</dbReference>
<dbReference type="Ensembl" id="ENSMUST00000173163.8">
    <molecule id="P97819-2"/>
    <property type="protein sequence ID" value="ENSMUSP00000134456.2"/>
    <property type="gene ID" value="ENSMUSG00000042632.18"/>
</dbReference>
<dbReference type="Ensembl" id="ENSMUST00000174021.8">
    <molecule id="P97819-1"/>
    <property type="protein sequence ID" value="ENSMUSP00000134672.2"/>
    <property type="gene ID" value="ENSMUSG00000042632.18"/>
</dbReference>
<dbReference type="GeneID" id="53357"/>
<dbReference type="KEGG" id="mmu:53357"/>
<dbReference type="UCSC" id="uc007wtd.2">
    <molecule id="P97819-1"/>
    <property type="organism name" value="mouse"/>
</dbReference>
<dbReference type="AGR" id="MGI:1859152"/>
<dbReference type="CTD" id="8398"/>
<dbReference type="MGI" id="MGI:1859152">
    <property type="gene designation" value="Pla2g6"/>
</dbReference>
<dbReference type="VEuPathDB" id="HostDB:ENSMUSG00000042632"/>
<dbReference type="eggNOG" id="KOG0513">
    <property type="taxonomic scope" value="Eukaryota"/>
</dbReference>
<dbReference type="GeneTree" id="ENSGT00940000158756"/>
<dbReference type="HOGENOM" id="CLU_010817_0_0_1"/>
<dbReference type="InParanoid" id="P97819"/>
<dbReference type="OMA" id="ARCNILG"/>
<dbReference type="OrthoDB" id="10021675at2759"/>
<dbReference type="PhylomeDB" id="P97819"/>
<dbReference type="TreeFam" id="TF319230"/>
<dbReference type="Reactome" id="R-MMU-1482788">
    <property type="pathway name" value="Acyl chain remodelling of PC"/>
</dbReference>
<dbReference type="Reactome" id="R-MMU-1482839">
    <property type="pathway name" value="Acyl chain remodelling of PE"/>
</dbReference>
<dbReference type="Reactome" id="R-MMU-2029485">
    <property type="pathway name" value="Role of phospholipids in phagocytosis"/>
</dbReference>
<dbReference type="Reactome" id="R-MMU-6811436">
    <property type="pathway name" value="COPI-independent Golgi-to-ER retrograde traffic"/>
</dbReference>
<dbReference type="BioGRID-ORCS" id="53357">
    <property type="hits" value="2 hits in 77 CRISPR screens"/>
</dbReference>
<dbReference type="ChiTaRS" id="Pla2g6">
    <property type="organism name" value="mouse"/>
</dbReference>
<dbReference type="PRO" id="PR:P97819"/>
<dbReference type="Proteomes" id="UP000000589">
    <property type="component" value="Chromosome 15"/>
</dbReference>
<dbReference type="RNAct" id="P97819">
    <property type="molecule type" value="protein"/>
</dbReference>
<dbReference type="Bgee" id="ENSMUSG00000042632">
    <property type="expression patterns" value="Expressed in gastrula and 252 other cell types or tissues"/>
</dbReference>
<dbReference type="ExpressionAtlas" id="P97819">
    <property type="expression patterns" value="baseline and differential"/>
</dbReference>
<dbReference type="GO" id="GO:0005615">
    <property type="term" value="C:extracellular space"/>
    <property type="evidence" value="ECO:0007669"/>
    <property type="project" value="Ensembl"/>
</dbReference>
<dbReference type="GO" id="GO:0015630">
    <property type="term" value="C:microtubule cytoskeleton"/>
    <property type="evidence" value="ECO:0007669"/>
    <property type="project" value="Ensembl"/>
</dbReference>
<dbReference type="GO" id="GO:0005739">
    <property type="term" value="C:mitochondrion"/>
    <property type="evidence" value="ECO:0007669"/>
    <property type="project" value="UniProtKB-SubCell"/>
</dbReference>
<dbReference type="GO" id="GO:0016607">
    <property type="term" value="C:nuclear speck"/>
    <property type="evidence" value="ECO:0007669"/>
    <property type="project" value="Ensembl"/>
</dbReference>
<dbReference type="GO" id="GO:0005886">
    <property type="term" value="C:plasma membrane"/>
    <property type="evidence" value="ECO:0007669"/>
    <property type="project" value="UniProtKB-SubCell"/>
</dbReference>
<dbReference type="GO" id="GO:0031143">
    <property type="term" value="C:pseudopodium"/>
    <property type="evidence" value="ECO:0007669"/>
    <property type="project" value="UniProtKB-SubCell"/>
</dbReference>
<dbReference type="GO" id="GO:0003847">
    <property type="term" value="F:1-alkyl-2-acetylglycerophosphocholine esterase activity"/>
    <property type="evidence" value="ECO:0000250"/>
    <property type="project" value="UniProtKB"/>
</dbReference>
<dbReference type="GO" id="GO:0047499">
    <property type="term" value="F:calcium-independent phospholipase A2 activity"/>
    <property type="evidence" value="ECO:0000315"/>
    <property type="project" value="UniProtKB"/>
</dbReference>
<dbReference type="GO" id="GO:0005516">
    <property type="term" value="F:calmodulin binding"/>
    <property type="evidence" value="ECO:0007669"/>
    <property type="project" value="UniProtKB-KW"/>
</dbReference>
<dbReference type="GO" id="GO:0042802">
    <property type="term" value="F:identical protein binding"/>
    <property type="evidence" value="ECO:0007669"/>
    <property type="project" value="Ensembl"/>
</dbReference>
<dbReference type="GO" id="GO:0052816">
    <property type="term" value="F:long-chain fatty acyl-CoA hydrolase activity"/>
    <property type="evidence" value="ECO:0000315"/>
    <property type="project" value="UniProtKB"/>
</dbReference>
<dbReference type="GO" id="GO:0004622">
    <property type="term" value="F:lysophospholipase activity"/>
    <property type="evidence" value="ECO:0000250"/>
    <property type="project" value="UniProtKB"/>
</dbReference>
<dbReference type="GO" id="GO:0017171">
    <property type="term" value="F:serine hydrolase activity"/>
    <property type="evidence" value="ECO:0000314"/>
    <property type="project" value="MGI"/>
</dbReference>
<dbReference type="GO" id="GO:0019731">
    <property type="term" value="P:antibacterial humoral response"/>
    <property type="evidence" value="ECO:0007669"/>
    <property type="project" value="Ensembl"/>
</dbReference>
<dbReference type="GO" id="GO:0035965">
    <property type="term" value="P:cardiolipin acyl-chain remodeling"/>
    <property type="evidence" value="ECO:0000250"/>
    <property type="project" value="UniProtKB"/>
</dbReference>
<dbReference type="GO" id="GO:0006935">
    <property type="term" value="P:chemotaxis"/>
    <property type="evidence" value="ECO:0007669"/>
    <property type="project" value="UniProtKB-KW"/>
</dbReference>
<dbReference type="GO" id="GO:0046473">
    <property type="term" value="P:phosphatidic acid metabolic process"/>
    <property type="evidence" value="ECO:0000250"/>
    <property type="project" value="UniProtKB"/>
</dbReference>
<dbReference type="GO" id="GO:0034638">
    <property type="term" value="P:phosphatidylcholine catabolic process"/>
    <property type="evidence" value="ECO:0000250"/>
    <property type="project" value="UniProtKB"/>
</dbReference>
<dbReference type="GO" id="GO:0046338">
    <property type="term" value="P:phosphatidylethanolamine catabolic process"/>
    <property type="evidence" value="ECO:0000250"/>
    <property type="project" value="UniProtKB"/>
</dbReference>
<dbReference type="GO" id="GO:0046469">
    <property type="term" value="P:platelet activating factor metabolic process"/>
    <property type="evidence" value="ECO:0000250"/>
    <property type="project" value="UniProtKB"/>
</dbReference>
<dbReference type="GO" id="GO:0035774">
    <property type="term" value="P:positive regulation of insulin secretion involved in cellular response to glucose stimulus"/>
    <property type="evidence" value="ECO:0000315"/>
    <property type="project" value="UniProtKB"/>
</dbReference>
<dbReference type="CDD" id="cd07212">
    <property type="entry name" value="Pat_PNPLA9"/>
    <property type="match status" value="1"/>
</dbReference>
<dbReference type="FunFam" id="1.25.40.20:FF:000338">
    <property type="entry name" value="85/88 kDa calcium-independent phospholipase A2"/>
    <property type="match status" value="1"/>
</dbReference>
<dbReference type="FunFam" id="3.40.1090.10:FF:000006">
    <property type="entry name" value="85/88 kDa calcium-independent phospholipase A2"/>
    <property type="match status" value="1"/>
</dbReference>
<dbReference type="Gene3D" id="1.25.40.20">
    <property type="entry name" value="Ankyrin repeat-containing domain"/>
    <property type="match status" value="3"/>
</dbReference>
<dbReference type="Gene3D" id="3.40.1090.10">
    <property type="entry name" value="Cytosolic phospholipase A2 catalytic domain"/>
    <property type="match status" value="1"/>
</dbReference>
<dbReference type="InterPro" id="IPR016035">
    <property type="entry name" value="Acyl_Trfase/lysoPLipase"/>
</dbReference>
<dbReference type="InterPro" id="IPR002110">
    <property type="entry name" value="Ankyrin_rpt"/>
</dbReference>
<dbReference type="InterPro" id="IPR036770">
    <property type="entry name" value="Ankyrin_rpt-contain_sf"/>
</dbReference>
<dbReference type="InterPro" id="IPR047148">
    <property type="entry name" value="PLPL9"/>
</dbReference>
<dbReference type="InterPro" id="IPR002641">
    <property type="entry name" value="PNPLA_dom"/>
</dbReference>
<dbReference type="PANTHER" id="PTHR24139:SF34">
    <property type="entry name" value="85_88 KDA CALCIUM-INDEPENDENT PHOSPHOLIPASE A2"/>
    <property type="match status" value="1"/>
</dbReference>
<dbReference type="PANTHER" id="PTHR24139">
    <property type="entry name" value="CALCIUM-INDEPENDENT PHOSPHOLIPASE A2"/>
    <property type="match status" value="1"/>
</dbReference>
<dbReference type="Pfam" id="PF12796">
    <property type="entry name" value="Ank_2"/>
    <property type="match status" value="2"/>
</dbReference>
<dbReference type="Pfam" id="PF01734">
    <property type="entry name" value="Patatin"/>
    <property type="match status" value="1"/>
</dbReference>
<dbReference type="PRINTS" id="PR01415">
    <property type="entry name" value="ANKYRIN"/>
</dbReference>
<dbReference type="SMART" id="SM00248">
    <property type="entry name" value="ANK"/>
    <property type="match status" value="6"/>
</dbReference>
<dbReference type="SUPFAM" id="SSF48403">
    <property type="entry name" value="Ankyrin repeat"/>
    <property type="match status" value="1"/>
</dbReference>
<dbReference type="SUPFAM" id="SSF52151">
    <property type="entry name" value="FabD/lysophospholipase-like"/>
    <property type="match status" value="1"/>
</dbReference>
<dbReference type="PROSITE" id="PS50297">
    <property type="entry name" value="ANK_REP_REGION"/>
    <property type="match status" value="1"/>
</dbReference>
<dbReference type="PROSITE" id="PS50088">
    <property type="entry name" value="ANK_REPEAT"/>
    <property type="match status" value="4"/>
</dbReference>
<dbReference type="PROSITE" id="PS51635">
    <property type="entry name" value="PNPLA"/>
    <property type="match status" value="1"/>
</dbReference>
<keyword id="KW-0025">Alternative splicing</keyword>
<keyword id="KW-0040">ANK repeat</keyword>
<keyword id="KW-0112">Calmodulin-binding</keyword>
<keyword id="KW-1003">Cell membrane</keyword>
<keyword id="KW-0966">Cell projection</keyword>
<keyword id="KW-0145">Chemotaxis</keyword>
<keyword id="KW-0963">Cytoplasm</keyword>
<keyword id="KW-0903">Direct protein sequencing</keyword>
<keyword id="KW-0378">Hydrolase</keyword>
<keyword id="KW-0443">Lipid metabolism</keyword>
<keyword id="KW-0472">Membrane</keyword>
<keyword id="KW-0496">Mitochondrion</keyword>
<keyword id="KW-1208">Phospholipid metabolism</keyword>
<keyword id="KW-0597">Phosphoprotein</keyword>
<keyword id="KW-1185">Reference proteome</keyword>
<keyword id="KW-0677">Repeat</keyword>
<keyword id="KW-0812">Transmembrane</keyword>
<keyword id="KW-1133">Transmembrane helix</keyword>
<comment type="function">
    <text evidence="1 2 7 9 11">Calcium-independent phospholipase involved in phospholipid remodeling with implications in cellular membrane homeostasis, mitochondrial integrity and signal transduction. Hydrolyzes the ester bond of the fatty acyl group attached at sn-1 or sn-2 position of phospholipids (phospholipase A1 and A2 activity respectively), producing lysophospholipids that are used in deacylation-reacylation cycles (PubMed:18937505). Hydrolyzes both saturated and unsaturated long fatty acyl chains in various glycerophospholipid classes such as phosphatidylcholines, phosphatidylethanolamines and phosphatidates, with a preference for hydrolysis at sn-2 position. Can further hydrolyze lysophospholipids carrying saturated fatty acyl chains (lysophospholipase activity). Upon oxidative stress, contributes to remodeling of mitochondrial phospholipids in pancreatic beta cells, in a repair mechanism to reduce oxidized lipid content (By similarity). Preferentially hydrolyzes oxidized polyunsaturated fatty acyl chains from cardiolipins, yielding monolysocardiolipins that can be reacylated with unoxidized fatty acyls to regenerate native cardiolipin species. Hydrolyzes oxidized glycerophosphoethanolamines present in pancreatic islets, releasing oxidized polyunsaturated fatty acids such as hydroxyeicosatetraenoates (HETEs) (PubMed:24648512). Has thioesterase activity toward fatty-acyl CoA releasing CoA-SH known to facilitate fatty acid transport and beta-oxidation in mitochondria particularly in skeletal muscle (PubMed:18937505). Plays a role in regulation of membrane dynamics and homeostasis. Selectively hydrolyzes sn-2 arachidonoyl group in plasmalogen phospholipids, structural components of lipid rafts and myelin (By similarity). Regulates F-actin polymerization at the pseudopods, which is required for both speed and directionality of MCP1/CCL2-induced monocyte chemotaxis (By similarity). Targets membrane phospholipids to produce potent lipid signaling messengers. Generates lysophosphatidate (LPA, 1-acyl-glycerol-3-phosphate), which acts via G-protein receptors in various cell types. Has phospholipase A2 activity toward platelet-activating factor (PAF, 1-O-alkyl-2-acetyl-sn-glycero-3-phosphocholine), likely playing a role in inactivation of this potent pro-inflammatory signaling lipid (By similarity). In response to glucose, amplifies calcium influx in pancreatic beta cells to promote INS secretion (PubMed:17895289).</text>
</comment>
<comment type="catalytic activity">
    <reaction evidence="9">
        <text>a 1,2-diacyl-sn-glycero-3-phosphocholine + H2O = a 1-acyl-sn-glycero-3-phosphocholine + a fatty acid + H(+)</text>
        <dbReference type="Rhea" id="RHEA:15801"/>
        <dbReference type="ChEBI" id="CHEBI:15377"/>
        <dbReference type="ChEBI" id="CHEBI:15378"/>
        <dbReference type="ChEBI" id="CHEBI:28868"/>
        <dbReference type="ChEBI" id="CHEBI:57643"/>
        <dbReference type="ChEBI" id="CHEBI:58168"/>
        <dbReference type="EC" id="3.1.1.4"/>
    </reaction>
    <physiologicalReaction direction="left-to-right" evidence="15">
        <dbReference type="Rhea" id="RHEA:15802"/>
    </physiologicalReaction>
</comment>
<comment type="catalytic activity">
    <reaction evidence="1">
        <text>a 1-O-alkyl-2-acyl-sn-glycero-3-phosphocholine + H2O = a 1-O-alkyl-sn-glycero-3-phosphocholine + a fatty acid + H(+)</text>
        <dbReference type="Rhea" id="RHEA:36231"/>
        <dbReference type="ChEBI" id="CHEBI:15377"/>
        <dbReference type="ChEBI" id="CHEBI:15378"/>
        <dbReference type="ChEBI" id="CHEBI:28868"/>
        <dbReference type="ChEBI" id="CHEBI:30909"/>
        <dbReference type="ChEBI" id="CHEBI:36702"/>
        <dbReference type="EC" id="3.1.1.4"/>
    </reaction>
    <physiologicalReaction direction="left-to-right" evidence="1">
        <dbReference type="Rhea" id="RHEA:36232"/>
    </physiologicalReaction>
</comment>
<comment type="catalytic activity">
    <reaction evidence="1">
        <text>1,2-dihexadecanoyl-sn-glycero-3-phosphocholine + H2O = 1-hexadecanoyl-sn-glycero-3-phosphocholine + hexadecanoate + H(+)</text>
        <dbReference type="Rhea" id="RHEA:41223"/>
        <dbReference type="ChEBI" id="CHEBI:7896"/>
        <dbReference type="ChEBI" id="CHEBI:15377"/>
        <dbReference type="ChEBI" id="CHEBI:15378"/>
        <dbReference type="ChEBI" id="CHEBI:72998"/>
        <dbReference type="ChEBI" id="CHEBI:72999"/>
    </reaction>
    <physiologicalReaction direction="left-to-right" evidence="1">
        <dbReference type="Rhea" id="RHEA:41224"/>
    </physiologicalReaction>
</comment>
<comment type="catalytic activity">
    <reaction evidence="2">
        <text>1-hexadecanoyl-2-(9Z-octadecenoyl)-sn-glycero-3-phosphocholine + H2O = 1-hexadecanoyl-sn-glycero-3-phosphocholine + (9Z)-octadecenoate + H(+)</text>
        <dbReference type="Rhea" id="RHEA:38779"/>
        <dbReference type="ChEBI" id="CHEBI:15377"/>
        <dbReference type="ChEBI" id="CHEBI:15378"/>
        <dbReference type="ChEBI" id="CHEBI:30823"/>
        <dbReference type="ChEBI" id="CHEBI:72998"/>
        <dbReference type="ChEBI" id="CHEBI:73001"/>
    </reaction>
    <physiologicalReaction direction="left-to-right" evidence="2">
        <dbReference type="Rhea" id="RHEA:38780"/>
    </physiologicalReaction>
</comment>
<comment type="catalytic activity">
    <reaction evidence="9">
        <text>1-hexadecanoyl-2-(9Z,12Z-octadecadienoyl)-sn-glycero-3-phosphocholine + H2O = (9Z,12Z)-octadecadienoate + 1-hexadecanoyl-sn-glycero-3-phosphocholine + H(+)</text>
        <dbReference type="Rhea" id="RHEA:40811"/>
        <dbReference type="ChEBI" id="CHEBI:15377"/>
        <dbReference type="ChEBI" id="CHEBI:15378"/>
        <dbReference type="ChEBI" id="CHEBI:30245"/>
        <dbReference type="ChEBI" id="CHEBI:72998"/>
        <dbReference type="ChEBI" id="CHEBI:73002"/>
    </reaction>
    <physiologicalReaction direction="left-to-right" evidence="15">
        <dbReference type="Rhea" id="RHEA:40812"/>
    </physiologicalReaction>
</comment>
<comment type="catalytic activity">
    <reaction evidence="2">
        <text>1-hexadecanoyl-2-(5Z,8Z,11Z,14Z-eicosatetraenoyl)-sn-glycero-3-phosphocholine + H2O = 1-hexadecanoyl-sn-glycero-3-phosphocholine + (5Z,8Z,11Z,14Z)-eicosatetraenoate + H(+)</text>
        <dbReference type="Rhea" id="RHEA:40427"/>
        <dbReference type="ChEBI" id="CHEBI:15377"/>
        <dbReference type="ChEBI" id="CHEBI:15378"/>
        <dbReference type="ChEBI" id="CHEBI:32395"/>
        <dbReference type="ChEBI" id="CHEBI:72998"/>
        <dbReference type="ChEBI" id="CHEBI:73003"/>
    </reaction>
    <physiologicalReaction direction="left-to-right" evidence="2">
        <dbReference type="Rhea" id="RHEA:40428"/>
    </physiologicalReaction>
</comment>
<comment type="catalytic activity">
    <reaction evidence="1">
        <text>1-octadecanoyl-2-(5Z,8Z,11Z,14Z-eicosatetraenoyl)-sn-glycero-3-phosphocholine + H2O = 1-octadecanoyl-sn-glycero-3-phosphocholine + (5Z,8Z,11Z,14Z)-eicosatetraenoate + H(+)</text>
        <dbReference type="Rhea" id="RHEA:40519"/>
        <dbReference type="ChEBI" id="CHEBI:15377"/>
        <dbReference type="ChEBI" id="CHEBI:15378"/>
        <dbReference type="ChEBI" id="CHEBI:32395"/>
        <dbReference type="ChEBI" id="CHEBI:73858"/>
        <dbReference type="ChEBI" id="CHEBI:74965"/>
    </reaction>
    <physiologicalReaction direction="left-to-right" evidence="1">
        <dbReference type="Rhea" id="RHEA:40520"/>
    </physiologicalReaction>
</comment>
<comment type="catalytic activity">
    <reaction evidence="7">
        <text>1-hexadecanoyl-2-(5Z,8Z,11Z,14Z-eicosatetraenoyl)-sn-glycero-3-phosphoethanolamine + H2O = 1-hexadecanoyl-sn-glycero-3-phosphoethanolamine + (5Z,8Z,11Z,14Z)-eicosatetraenoate + H(+)</text>
        <dbReference type="Rhea" id="RHEA:40431"/>
        <dbReference type="ChEBI" id="CHEBI:15377"/>
        <dbReference type="ChEBI" id="CHEBI:15378"/>
        <dbReference type="ChEBI" id="CHEBI:32395"/>
        <dbReference type="ChEBI" id="CHEBI:73004"/>
        <dbReference type="ChEBI" id="CHEBI:73009"/>
    </reaction>
    <physiologicalReaction direction="left-to-right" evidence="14">
        <dbReference type="Rhea" id="RHEA:40432"/>
    </physiologicalReaction>
</comment>
<comment type="catalytic activity">
    <reaction evidence="1">
        <text>1,2-dihexadecanoyl-sn-glycero-3-phosphate + H2O = 1-hexadecanoyl-sn-glycero-3-phosphate + hexadecanoate + H(+)</text>
        <dbReference type="Rhea" id="RHEA:63304"/>
        <dbReference type="ChEBI" id="CHEBI:7896"/>
        <dbReference type="ChEBI" id="CHEBI:15377"/>
        <dbReference type="ChEBI" id="CHEBI:15378"/>
        <dbReference type="ChEBI" id="CHEBI:57518"/>
        <dbReference type="ChEBI" id="CHEBI:72859"/>
    </reaction>
    <physiologicalReaction direction="left-to-right" evidence="1">
        <dbReference type="Rhea" id="RHEA:63305"/>
    </physiologicalReaction>
</comment>
<comment type="catalytic activity">
    <reaction evidence="2">
        <text>a 1-acyl-sn-glycero-3-phosphocholine + H2O = sn-glycerol 3-phosphocholine + a fatty acid + H(+)</text>
        <dbReference type="Rhea" id="RHEA:15177"/>
        <dbReference type="ChEBI" id="CHEBI:15377"/>
        <dbReference type="ChEBI" id="CHEBI:15378"/>
        <dbReference type="ChEBI" id="CHEBI:16870"/>
        <dbReference type="ChEBI" id="CHEBI:28868"/>
        <dbReference type="ChEBI" id="CHEBI:58168"/>
        <dbReference type="EC" id="3.1.1.5"/>
    </reaction>
    <physiologicalReaction direction="left-to-right" evidence="2">
        <dbReference type="Rhea" id="RHEA:15178"/>
    </physiologicalReaction>
</comment>
<comment type="catalytic activity">
    <reaction evidence="2">
        <text>1-hexadecanoyl-sn-glycero-3-phosphocholine + H2O = sn-glycerol 3-phosphocholine + hexadecanoate + H(+)</text>
        <dbReference type="Rhea" id="RHEA:40435"/>
        <dbReference type="ChEBI" id="CHEBI:7896"/>
        <dbReference type="ChEBI" id="CHEBI:15377"/>
        <dbReference type="ChEBI" id="CHEBI:15378"/>
        <dbReference type="ChEBI" id="CHEBI:16870"/>
        <dbReference type="ChEBI" id="CHEBI:72998"/>
    </reaction>
    <physiologicalReaction direction="left-to-right" evidence="2">
        <dbReference type="Rhea" id="RHEA:40436"/>
    </physiologicalReaction>
</comment>
<comment type="catalytic activity">
    <reaction evidence="1">
        <text>1-(5Z,8Z,11Z,14Z-eicosatetraenoyl)-sn-glycero-3-phosphocholine + H2O = sn-glycerol 3-phosphocholine + (5Z,8Z,11Z,14Z)-eicosatetraenoate + H(+)</text>
        <dbReference type="Rhea" id="RHEA:40831"/>
        <dbReference type="ChEBI" id="CHEBI:15377"/>
        <dbReference type="ChEBI" id="CHEBI:15378"/>
        <dbReference type="ChEBI" id="CHEBI:16870"/>
        <dbReference type="ChEBI" id="CHEBI:32395"/>
        <dbReference type="ChEBI" id="CHEBI:74344"/>
    </reaction>
    <physiologicalReaction direction="left-to-right" evidence="1">
        <dbReference type="Rhea" id="RHEA:40832"/>
    </physiologicalReaction>
</comment>
<comment type="catalytic activity">
    <reaction evidence="1">
        <text>2-(5Z,8Z,11Z,14Z)-eicosatetraenoyl-sn-glycero-3-phosphocholine + H2O = sn-glycerol 3-phosphocholine + (5Z,8Z,11Z,14Z)-eicosatetraenoate + H(+)</text>
        <dbReference type="Rhea" id="RHEA:40827"/>
        <dbReference type="ChEBI" id="CHEBI:15377"/>
        <dbReference type="ChEBI" id="CHEBI:15378"/>
        <dbReference type="ChEBI" id="CHEBI:16870"/>
        <dbReference type="ChEBI" id="CHEBI:32395"/>
        <dbReference type="ChEBI" id="CHEBI:76079"/>
    </reaction>
    <physiologicalReaction direction="left-to-right" evidence="1">
        <dbReference type="Rhea" id="RHEA:40828"/>
    </physiologicalReaction>
</comment>
<comment type="catalytic activity">
    <reaction evidence="1">
        <text>1-O-hexadecyl-2-(5Z,8Z,11Z,14Z)-eicosatetraenoyl-sn-glycero-3-phosphocholine + H2O = 1-O-hexadecyl-sn-glycero-3-phosphocholine + (5Z,8Z,11Z,14Z)-eicosatetraenoate + H(+)</text>
        <dbReference type="Rhea" id="RHEA:41067"/>
        <dbReference type="ChEBI" id="CHEBI:15377"/>
        <dbReference type="ChEBI" id="CHEBI:15378"/>
        <dbReference type="ChEBI" id="CHEBI:32395"/>
        <dbReference type="ChEBI" id="CHEBI:55430"/>
        <dbReference type="ChEBI" id="CHEBI:64496"/>
    </reaction>
    <physiologicalReaction direction="left-to-right" evidence="1">
        <dbReference type="Rhea" id="RHEA:41068"/>
    </physiologicalReaction>
</comment>
<comment type="catalytic activity">
    <reaction evidence="1">
        <text>1-O-hexadecyl-2-acetyl-sn-glycero-3-phosphocholine + H2O = 1-O-hexadecyl-sn-glycero-3-phosphocholine + acetate + H(+)</text>
        <dbReference type="Rhea" id="RHEA:40479"/>
        <dbReference type="ChEBI" id="CHEBI:15377"/>
        <dbReference type="ChEBI" id="CHEBI:15378"/>
        <dbReference type="ChEBI" id="CHEBI:30089"/>
        <dbReference type="ChEBI" id="CHEBI:44811"/>
        <dbReference type="ChEBI" id="CHEBI:64496"/>
    </reaction>
    <physiologicalReaction direction="left-to-right" evidence="1">
        <dbReference type="Rhea" id="RHEA:40480"/>
    </physiologicalReaction>
</comment>
<comment type="catalytic activity">
    <reaction evidence="9">
        <text>hexadecanoyl-CoA + H2O = hexadecanoate + CoA + H(+)</text>
        <dbReference type="Rhea" id="RHEA:16645"/>
        <dbReference type="ChEBI" id="CHEBI:7896"/>
        <dbReference type="ChEBI" id="CHEBI:15377"/>
        <dbReference type="ChEBI" id="CHEBI:15378"/>
        <dbReference type="ChEBI" id="CHEBI:57287"/>
        <dbReference type="ChEBI" id="CHEBI:57379"/>
        <dbReference type="EC" id="3.1.2.2"/>
    </reaction>
    <physiologicalReaction direction="left-to-right" evidence="15">
        <dbReference type="Rhea" id="RHEA:16646"/>
    </physiologicalReaction>
</comment>
<comment type="catalytic activity">
    <reaction evidence="2">
        <text>1',3'-bis[1,2-di-(9Z-octadecenoyl)-sn-glycero-3-phospho]-glycerol + H2O = 1'-[1,2-di-(9Z-octadecenoyl)-sn-glycero-3-phospho]-3'-[1-(9Z-octadecenoyl)-sn-glycero-3-phospho]-glycerol + (9Z)-octadecenoate + H(+)</text>
        <dbReference type="Rhea" id="RHEA:40463"/>
        <dbReference type="ChEBI" id="CHEBI:15377"/>
        <dbReference type="ChEBI" id="CHEBI:15378"/>
        <dbReference type="ChEBI" id="CHEBI:30823"/>
        <dbReference type="ChEBI" id="CHEBI:77253"/>
        <dbReference type="ChEBI" id="CHEBI:77259"/>
    </reaction>
    <physiologicalReaction direction="left-to-right" evidence="2">
        <dbReference type="Rhea" id="RHEA:40464"/>
    </physiologicalReaction>
</comment>
<comment type="catalytic activity">
    <reaction evidence="2">
        <text>1'-[1,2-di-(9Z-octadecenoyl)-sn-glycero-3-phospho]-3'-[1-(9Z-octadecenoyl)-sn-glycero-3-phospho]-glycerol + H2O = 1',3'-bis-[1-(9Z-octadecenoyl)-sn-glycero-3-phospho]-glycerol + (9Z)-octadecenoate + H(+)</text>
        <dbReference type="Rhea" id="RHEA:40467"/>
        <dbReference type="ChEBI" id="CHEBI:15377"/>
        <dbReference type="ChEBI" id="CHEBI:15378"/>
        <dbReference type="ChEBI" id="CHEBI:30823"/>
        <dbReference type="ChEBI" id="CHEBI:77256"/>
        <dbReference type="ChEBI" id="CHEBI:77259"/>
    </reaction>
    <physiologicalReaction direction="left-to-right" evidence="2">
        <dbReference type="Rhea" id="RHEA:40468"/>
    </physiologicalReaction>
</comment>
<comment type="catalytic activity">
    <reaction evidence="11">
        <text>1',3'-bis-[1,2-di-(9Z,12Z-octadecadienoyl)-sn-glycero-3-phospho]-glycerol + H2O = 1'-[1,2-di-(9Z,12Z-octadecadienoyl)-sn-glycero-3-phospho]-3'-[1-(9Z,12Z-octadecadienoyl)-sn-glycero-3-phospho]-glycerol + (9Z,12Z)-octadecadienoate + H(+)</text>
        <dbReference type="Rhea" id="RHEA:52812"/>
        <dbReference type="ChEBI" id="CHEBI:15377"/>
        <dbReference type="ChEBI" id="CHEBI:15378"/>
        <dbReference type="ChEBI" id="CHEBI:30245"/>
        <dbReference type="ChEBI" id="CHEBI:83580"/>
        <dbReference type="ChEBI" id="CHEBI:83581"/>
    </reaction>
    <physiologicalReaction direction="right-to-left" evidence="16">
        <dbReference type="Rhea" id="RHEA:52814"/>
    </physiologicalReaction>
</comment>
<comment type="catalytic activity">
    <reaction evidence="3">
        <text>1-octadecanoyl-2-(15-hydroxy-(5Z,8Z,11Z,13E)-eicosatetraenoyl)-sn-glycero-3-phosphoethanolamine + H2O = 1-octadecanoyl-sn-glycero-3-phosphoethanolamine + 15-hydroxy-(5Z,8Z,11Z,13E)-eicosatetraenoate + H(+)</text>
        <dbReference type="Rhea" id="RHEA:63256"/>
        <dbReference type="ChEBI" id="CHEBI:15377"/>
        <dbReference type="ChEBI" id="CHEBI:15378"/>
        <dbReference type="ChEBI" id="CHEBI:75036"/>
        <dbReference type="ChEBI" id="CHEBI:78832"/>
        <dbReference type="ChEBI" id="CHEBI:146277"/>
    </reaction>
    <physiologicalReaction direction="left-to-right" evidence="3">
        <dbReference type="Rhea" id="RHEA:63257"/>
    </physiologicalReaction>
</comment>
<comment type="activity regulation">
    <text evidence="3 7 9">Inhibited by calcium-activated calmodulin (By similarity). Activated by ATP (PubMed:17895289, PubMed:18937505). Inhibited by bromoenol lactone (BEL) (PubMed:17895289, PubMed:18937505).</text>
</comment>
<comment type="subunit">
    <text evidence="1">Homodimer formed by catalytic domains tightly interacting through a large hydrophobic interface. The contact area involves 3 alpha helices, several loops and a part of the beta sheet from each monomer. Both active sites of the dimer are in close proximity adopting an open conformation that provide sufficient space for phospholipid access and favoring cooperativity in deacylation-reacylation reactions. Each monomer has 9 ankyrin repeats stacked side-by-side in an elongated structure oriented outwards from the catalytic core.</text>
</comment>
<comment type="subcellular location">
    <subcellularLocation>
        <location evidence="6">Cytoplasm</location>
    </subcellularLocation>
    <subcellularLocation>
        <location evidence="6">Cell membrane</location>
    </subcellularLocation>
    <subcellularLocation>
        <location evidence="11">Mitochondrion</location>
    </subcellularLocation>
    <subcellularLocation>
        <location evidence="2">Cell projection</location>
        <location evidence="2">Pseudopodium</location>
    </subcellularLocation>
    <text evidence="2">Recruited to the membrane-enriched pseudopods upon MCP1/CCL2 stimulation in monocytes.</text>
</comment>
<comment type="alternative products">
    <event type="alternative splicing"/>
    <isoform>
        <id>P97819-1</id>
        <name>Long</name>
        <name>iPLA2-L</name>
        <sequence type="displayed"/>
    </isoform>
    <isoform>
        <id>P97819-2</id>
        <name>Short</name>
        <name>iPLA2-S</name>
        <sequence type="described" ref="VSP_044364"/>
    </isoform>
</comment>
<comment type="tissue specificity">
    <text evidence="8 9">Expressed in neurons of central and peripheral nervous system (PubMed:18305254, PubMed:18937505). Highly expressed in Purkinje cells in cerebellum and dorsal and ventral horn neurons in the spinal cord (PubMed:18305254). Expressed in testis (at protein level) (PubMed:18305254). Expressed in skeletal muscle (at protein level) (PubMed:18937505).</text>
</comment>
<comment type="domain">
    <text evidence="1 3">Has two putative calmodulin binding domains, the 1-9-14 and IQ motifs. One calmodulin molecule interacts with PLA2G6 dimer, likely through 1-9-14 motif on each monomer (By similarity). Binds calmodulin in a calcium-dependent way (By similarity).</text>
</comment>
<comment type="disruption phenotype">
    <text evidence="8 9 10">Knockout mice represent an appropriate model for studying the pathogenesis of neuroaxonal dystrophy in human neurodegenerative diseases (PubMed:18305254, PubMed:18937505). Mutant mice show neuroaxonal dystrophy and significant motor dysfunction from the age of 50 weeks that progressed to ataxia by 2 years (PubMed:18305254). At 55 weeks they display numerous spheroids located in the axons and synapses throughout central and peripheral nervous system, mostly prominent in the tegmentum of the medulla, the lower pons, and the dorsal horns of the spinal cord. Sciatic nerves have reduced numbers of myelinated fibers indicative of neural degeneration (PubMed:18305254). The neuroaxonal dystrophy is associated with deficient remodeling of the mitochondrial inner membrane and presynaptic membrane of axon terminals (PubMed:21813701). Mutant mice gradually lose weight and die earlier than wild-type littermates (PubMed:18305254). Mutant male mice show reduced fertility (PubMed:18305254).</text>
</comment>
<reference key="1">
    <citation type="journal article" date="1997" name="J. Biol. Chem.">
        <title>Identity between the Ca2+-independent phospholipase A2 enzymes from P388D1 macrophages and Chinese hamster ovary cells.</title>
        <authorList>
            <person name="Balboa M.A."/>
            <person name="Balsinde J."/>
            <person name="Jones S.S."/>
            <person name="Dennis E.A."/>
        </authorList>
    </citation>
    <scope>NUCLEOTIDE SEQUENCE [MRNA] (ISOFORM SHORT)</scope>
    <source>
        <strain>DBA/2J</strain>
    </source>
</reference>
<reference key="2">
    <citation type="submission" date="2000-02" db="EMBL/GenBank/DDBJ databases">
        <authorList>
            <person name="Balboa M.A."/>
            <person name="Balsinde J."/>
            <person name="Jones S.S."/>
            <person name="Dennis E.A."/>
        </authorList>
    </citation>
    <scope>SEQUENCE REVISION TO 2-3; 9; 11 AND 211</scope>
</reference>
<reference key="3">
    <citation type="journal article" date="2001" name="Biochem. Biophys. Res. Commun.">
        <title>Role of calcium-independent phospholipases (iPLA(2)) in phosphatidylcholine metabolism.</title>
        <authorList>
            <person name="Chiu C.-H."/>
            <person name="Jackowski S."/>
        </authorList>
    </citation>
    <scope>NUCLEOTIDE SEQUENCE [MRNA] (ISOFORM LONG)</scope>
    <scope>ALTERNATIVE SPLICING</scope>
    <scope>SUBCELLULAR LOCATION</scope>
    <source>
        <strain>NIH Swiss</strain>
    </source>
</reference>
<reference key="4">
    <citation type="journal article" date="2004" name="Genome Res.">
        <title>The status, quality, and expansion of the NIH full-length cDNA project: the Mammalian Gene Collection (MGC).</title>
        <authorList>
            <consortium name="The MGC Project Team"/>
        </authorList>
    </citation>
    <scope>NUCLEOTIDE SEQUENCE [LARGE SCALE MRNA] (ISOFORMS LONG AND SHORT)</scope>
    <source>
        <strain>C57BL/6J</strain>
        <strain>FVB/N</strain>
        <strain>NMRI</strain>
        <tissue>Mammary tumor</tissue>
    </source>
</reference>
<reference key="5">
    <citation type="submission" date="2009-01" db="UniProtKB">
        <authorList>
            <person name="Lubec G."/>
            <person name="Sunyer B."/>
            <person name="Chen W.-Q."/>
        </authorList>
    </citation>
    <scope>PROTEIN SEQUENCE OF 479-491</scope>
    <scope>IDENTIFICATION BY MASS SPECTROMETRY</scope>
    <source>
        <strain>OF1</strain>
        <tissue>Hippocampus</tissue>
    </source>
</reference>
<reference key="6">
    <citation type="journal article" date="2010" name="Cell">
        <title>A tissue-specific atlas of mouse protein phosphorylation and expression.</title>
        <authorList>
            <person name="Huttlin E.L."/>
            <person name="Jedrychowski M.P."/>
            <person name="Elias J.E."/>
            <person name="Goswami T."/>
            <person name="Rad R."/>
            <person name="Beausoleil S.A."/>
            <person name="Villen J."/>
            <person name="Haas W."/>
            <person name="Sowa M.E."/>
            <person name="Gygi S.P."/>
        </authorList>
    </citation>
    <scope>IDENTIFICATION BY MASS SPECTROMETRY [LARGE SCALE ANALYSIS]</scope>
    <source>
        <tissue>Brain</tissue>
        <tissue>Liver</tissue>
        <tissue>Spleen</tissue>
        <tissue>Testis</tissue>
    </source>
</reference>
<reference key="7">
    <citation type="journal article" date="2008" name="Am. J. Physiol.">
        <title>Glucose homeostasis, insulin secretion, and islet phospholipids in mice that overexpress iPLA2beta in pancreatic beta-cells and in iPLA2beta-null mice.</title>
        <authorList>
            <person name="Bao S."/>
            <person name="Jacobson D.A."/>
            <person name="Wohltmann M."/>
            <person name="Bohrer A."/>
            <person name="Jin W."/>
            <person name="Philipson L.H."/>
            <person name="Turk J."/>
        </authorList>
    </citation>
    <scope>FUNCTION</scope>
    <scope>CATALYTIC ACTIVITY</scope>
    <scope>ACTIVITY REGULATION</scope>
</reference>
<reference key="8">
    <citation type="journal article" date="2008" name="Biochemistry">
        <title>Skeletal muscle group VIA phospholipase A2 (iPLA2beta): expression and role in fatty acid oxidation.</title>
        <authorList>
            <person name="Carper M.J."/>
            <person name="Zhang S."/>
            <person name="Turk J."/>
            <person name="Ramanadham S."/>
        </authorList>
    </citation>
    <scope>FUNCTION</scope>
    <scope>CATALYTIC ACTIVITY</scope>
    <scope>TISSUE SPECIFICITY</scope>
    <scope>ACTIVITY REGULATION</scope>
    <scope>DISRUPTION PHENOTYPE</scope>
</reference>
<reference key="9">
    <citation type="journal article" date="2008" name="J. Neurosci.">
        <title>Neuroaxonal dystrophy caused by group VIA phospholipase A2 deficiency in mice: a model of human neurodegenerative disease.</title>
        <authorList>
            <person name="Shinzawa K."/>
            <person name="Sumi H."/>
            <person name="Ikawa M."/>
            <person name="Matsuoka Y."/>
            <person name="Okabe M."/>
            <person name="Sakoda S."/>
            <person name="Tsujimoto Y."/>
        </authorList>
    </citation>
    <scope>DISRUPTION PHENOTYPE</scope>
    <scope>TISSUE SPECIFICITY</scope>
</reference>
<reference key="10">
    <citation type="journal article" date="2011" name="J. Neurosci.">
        <title>Neuroaxonal dystrophy in calcium-independent phospholipase A2beta deficiency results from insufficient remodeling and degeneration of mitochondrial and presynaptic membranes.</title>
        <authorList>
            <person name="Beck G."/>
            <person name="Sugiura Y."/>
            <person name="Shinzawa K."/>
            <person name="Kato S."/>
            <person name="Setou M."/>
            <person name="Tsujimoto Y."/>
            <person name="Sakoda S."/>
            <person name="Sumi-Akamaru H."/>
        </authorList>
    </citation>
    <scope>DISRUPTION PHENOTYPE</scope>
</reference>
<reference key="11">
    <citation type="journal article" date="2014" name="J. Biol. Chem.">
        <title>Group VIA phospholipase A2 mitigates palmitate-induced beta-cell mitochondrial injury and apoptosis.</title>
        <authorList>
            <person name="Song H."/>
            <person name="Wohltmann M."/>
            <person name="Tan M."/>
            <person name="Ladenson J.H."/>
            <person name="Turk J."/>
        </authorList>
    </citation>
    <scope>FUNCTION</scope>
    <scope>CATALYTIC ACTIVITY</scope>
    <scope>SUBCELLULAR LOCATION</scope>
</reference>
<feature type="chain" id="PRO_0000067038" description="85/88 kDa calcium-independent phospholipase A2">
    <location>
        <begin position="1"/>
        <end position="807"/>
    </location>
</feature>
<feature type="transmembrane region" description="Helical" evidence="4">
    <location>
        <begin position="481"/>
        <end position="501"/>
    </location>
</feature>
<feature type="transmembrane region" description="Helical" evidence="4">
    <location>
        <begin position="512"/>
        <end position="532"/>
    </location>
</feature>
<feature type="repeat" description="ANK 1" evidence="1">
    <location>
        <begin position="120"/>
        <end position="147"/>
    </location>
</feature>
<feature type="repeat" description="ANK 1" evidence="4">
    <location>
        <begin position="151"/>
        <end position="181"/>
    </location>
</feature>
<feature type="repeat" description="ANK 2" evidence="4">
    <location>
        <begin position="185"/>
        <end position="215"/>
    </location>
</feature>
<feature type="repeat" description="ANK 3" evidence="4">
    <location>
        <begin position="219"/>
        <end position="248"/>
    </location>
</feature>
<feature type="repeat" description="ANK 4" evidence="4">
    <location>
        <begin position="251"/>
        <end position="281"/>
    </location>
</feature>
<feature type="repeat" description="ANK 5" evidence="4">
    <location>
        <begin position="286"/>
        <end position="312"/>
    </location>
</feature>
<feature type="repeat" description="ANK 6" evidence="4">
    <location>
        <begin position="316"/>
        <end position="345"/>
    </location>
</feature>
<feature type="repeat" description="ANK 7" evidence="4">
    <location>
        <begin position="349"/>
        <end position="378"/>
    </location>
</feature>
<feature type="repeat" description="ANK 9" evidence="1">
    <location>
        <begin position="382"/>
        <end position="403"/>
    </location>
</feature>
<feature type="domain" description="PNPLA" evidence="5">
    <location>
        <begin position="482"/>
        <end position="666"/>
    </location>
</feature>
<feature type="region of interest" description="Calmodulin-binding (1-9-14 motif)" evidence="1">
    <location>
        <begin position="678"/>
        <end position="687"/>
    </location>
</feature>
<feature type="region of interest" description="Calmodulin-binding (IQ motif)" evidence="1">
    <location>
        <begin position="749"/>
        <end position="760"/>
    </location>
</feature>
<feature type="short sequence motif" description="GXGXXG" evidence="5">
    <location>
        <begin position="486"/>
        <end position="491"/>
    </location>
</feature>
<feature type="short sequence motif" description="GXSXG" evidence="5">
    <location>
        <begin position="518"/>
        <end position="522"/>
    </location>
</feature>
<feature type="short sequence motif" description="DGA/G" evidence="5">
    <location>
        <begin position="653"/>
        <end position="655"/>
    </location>
</feature>
<feature type="active site" description="Nucleophile" evidence="5">
    <location>
        <position position="520"/>
    </location>
</feature>
<feature type="active site" description="Proton acceptor" evidence="5">
    <location>
        <position position="653"/>
    </location>
</feature>
<feature type="modified residue" description="Phosphoserine" evidence="3">
    <location>
        <position position="13"/>
    </location>
</feature>
<feature type="splice variant" id="VSP_044364" description="In isoform Short." evidence="12 13">
    <original>LITRKALLTLLKTVGADHHFPIIQGVSTEQGSAAATHPLFSLDRTQPPAISLNNLE</original>
    <variation>Q</variation>
    <location>
        <begin position="396"/>
        <end position="451"/>
    </location>
</feature>
<protein>
    <recommendedName>
        <fullName>85/88 kDa calcium-independent phospholipase A2</fullName>
        <shortName>CaI-PLA2</shortName>
        <ecNumber evidence="9">3.1.1.4</ecNumber>
    </recommendedName>
    <alternativeName>
        <fullName>2-lysophosphatidylcholine acylhydrolase</fullName>
        <ecNumber evidence="2">3.1.1.5</ecNumber>
    </alternativeName>
    <alternativeName>
        <fullName>Group VI phospholipase A2</fullName>
        <shortName>GVI PLA2</shortName>
    </alternativeName>
    <alternativeName>
        <fullName>Intracellular membrane-associated calcium-independent phospholipase A2 beta</fullName>
        <shortName>iPLA2-beta</shortName>
    </alternativeName>
    <alternativeName>
        <fullName>Palmitoyl-CoA hydrolase</fullName>
        <ecNumber evidence="9">3.1.2.2</ecNumber>
    </alternativeName>
    <alternativeName>
        <fullName>Patatin-like phospholipase domain-containing protein 9</fullName>
        <shortName>PNPLA9</shortName>
    </alternativeName>
</protein>
<name>PLPL9_MOUSE</name>
<gene>
    <name type="primary">Pla2g6</name>
    <name type="synonym">Pnpla9</name>
</gene>
<proteinExistence type="evidence at protein level"/>